<name>AMPPA_METAR</name>
<dbReference type="EC" id="2.4.2.57" evidence="1"/>
<dbReference type="EMBL" id="AM114193">
    <property type="protein sequence ID" value="CAJ36435.1"/>
    <property type="molecule type" value="Genomic_DNA"/>
</dbReference>
<dbReference type="RefSeq" id="WP_012036091.1">
    <property type="nucleotide sequence ID" value="NC_009464.1"/>
</dbReference>
<dbReference type="SMR" id="Q0W5A8"/>
<dbReference type="STRING" id="351160.RCIX1126"/>
<dbReference type="GeneID" id="5144338"/>
<dbReference type="KEGG" id="rci:RCIX1126"/>
<dbReference type="PATRIC" id="fig|351160.9.peg.1803"/>
<dbReference type="eggNOG" id="arCOG02013">
    <property type="taxonomic scope" value="Archaea"/>
</dbReference>
<dbReference type="OrthoDB" id="9827at2157"/>
<dbReference type="Proteomes" id="UP000000663">
    <property type="component" value="Chromosome"/>
</dbReference>
<dbReference type="GO" id="GO:0005829">
    <property type="term" value="C:cytosol"/>
    <property type="evidence" value="ECO:0007669"/>
    <property type="project" value="TreeGrafter"/>
</dbReference>
<dbReference type="GO" id="GO:0004645">
    <property type="term" value="F:1,4-alpha-oligoglucan phosphorylase activity"/>
    <property type="evidence" value="ECO:0007669"/>
    <property type="project" value="InterPro"/>
</dbReference>
<dbReference type="GO" id="GO:0016208">
    <property type="term" value="F:AMP binding"/>
    <property type="evidence" value="ECO:0007669"/>
    <property type="project" value="UniProtKB-UniRule"/>
</dbReference>
<dbReference type="GO" id="GO:0016763">
    <property type="term" value="F:pentosyltransferase activity"/>
    <property type="evidence" value="ECO:0007669"/>
    <property type="project" value="UniProtKB-UniRule"/>
</dbReference>
<dbReference type="GO" id="GO:0006196">
    <property type="term" value="P:AMP catabolic process"/>
    <property type="evidence" value="ECO:0007669"/>
    <property type="project" value="UniProtKB-UniRule"/>
</dbReference>
<dbReference type="GO" id="GO:0046125">
    <property type="term" value="P:pyrimidine deoxyribonucleoside metabolic process"/>
    <property type="evidence" value="ECO:0007669"/>
    <property type="project" value="InterPro"/>
</dbReference>
<dbReference type="GO" id="GO:0006206">
    <property type="term" value="P:pyrimidine nucleobase metabolic process"/>
    <property type="evidence" value="ECO:0007669"/>
    <property type="project" value="InterPro"/>
</dbReference>
<dbReference type="Gene3D" id="1.20.970.50">
    <property type="match status" value="1"/>
</dbReference>
<dbReference type="Gene3D" id="2.40.40.20">
    <property type="match status" value="1"/>
</dbReference>
<dbReference type="Gene3D" id="3.40.1030.10">
    <property type="entry name" value="Nucleoside phosphorylase/phosphoribosyltransferase catalytic domain"/>
    <property type="match status" value="1"/>
</dbReference>
<dbReference type="Gene3D" id="3.90.1170.30">
    <property type="entry name" value="Pyrimidine nucleoside phosphorylase-like, C-terminal domain"/>
    <property type="match status" value="1"/>
</dbReference>
<dbReference type="HAMAP" id="MF_02132">
    <property type="entry name" value="AMP_phosphorylase"/>
    <property type="match status" value="1"/>
</dbReference>
<dbReference type="InterPro" id="IPR017713">
    <property type="entry name" value="AMP_phosphorylase"/>
</dbReference>
<dbReference type="InterPro" id="IPR000312">
    <property type="entry name" value="Glycosyl_Trfase_fam3"/>
</dbReference>
<dbReference type="InterPro" id="IPR017459">
    <property type="entry name" value="Glycosyl_Trfase_fam3_N_dom"/>
</dbReference>
<dbReference type="InterPro" id="IPR036320">
    <property type="entry name" value="Glycosyl_Trfase_fam3_N_dom_sf"/>
</dbReference>
<dbReference type="InterPro" id="IPR035902">
    <property type="entry name" value="Nuc_phospho_transferase"/>
</dbReference>
<dbReference type="InterPro" id="IPR036566">
    <property type="entry name" value="PYNP-like_C_sf"/>
</dbReference>
<dbReference type="InterPro" id="IPR013102">
    <property type="entry name" value="PYNP_C"/>
</dbReference>
<dbReference type="InterPro" id="IPR013466">
    <property type="entry name" value="Thymidine/AMP_Pase"/>
</dbReference>
<dbReference type="InterPro" id="IPR000053">
    <property type="entry name" value="Thymidine/pyrmidine_PPase"/>
</dbReference>
<dbReference type="NCBIfam" id="TIGR03327">
    <property type="entry name" value="AMP_phos"/>
    <property type="match status" value="1"/>
</dbReference>
<dbReference type="NCBIfam" id="TIGR02645">
    <property type="entry name" value="ARCH_P_rylase"/>
    <property type="match status" value="1"/>
</dbReference>
<dbReference type="NCBIfam" id="NF003338">
    <property type="entry name" value="PRK04350.1"/>
    <property type="match status" value="1"/>
</dbReference>
<dbReference type="PANTHER" id="PTHR10515">
    <property type="entry name" value="THYMIDINE PHOSPHORYLASE"/>
    <property type="match status" value="1"/>
</dbReference>
<dbReference type="PANTHER" id="PTHR10515:SF0">
    <property type="entry name" value="THYMIDINE PHOSPHORYLASE"/>
    <property type="match status" value="1"/>
</dbReference>
<dbReference type="Pfam" id="PF02885">
    <property type="entry name" value="Glycos_trans_3N"/>
    <property type="match status" value="1"/>
</dbReference>
<dbReference type="Pfam" id="PF00591">
    <property type="entry name" value="Glycos_transf_3"/>
    <property type="match status" value="1"/>
</dbReference>
<dbReference type="Pfam" id="PF07831">
    <property type="entry name" value="PYNP_C"/>
    <property type="match status" value="1"/>
</dbReference>
<dbReference type="PIRSF" id="PIRSF000478">
    <property type="entry name" value="TP_PyNP"/>
    <property type="match status" value="1"/>
</dbReference>
<dbReference type="SMART" id="SM00941">
    <property type="entry name" value="PYNP_C"/>
    <property type="match status" value="1"/>
</dbReference>
<dbReference type="SUPFAM" id="SSF52418">
    <property type="entry name" value="Nucleoside phosphorylase/phosphoribosyltransferase catalytic domain"/>
    <property type="match status" value="1"/>
</dbReference>
<dbReference type="SUPFAM" id="SSF47648">
    <property type="entry name" value="Nucleoside phosphorylase/phosphoribosyltransferase N-terminal domain"/>
    <property type="match status" value="1"/>
</dbReference>
<dbReference type="SUPFAM" id="SSF54680">
    <property type="entry name" value="Pyrimidine nucleoside phosphorylase C-terminal domain"/>
    <property type="match status" value="1"/>
</dbReference>
<keyword id="KW-0328">Glycosyltransferase</keyword>
<keyword id="KW-1185">Reference proteome</keyword>
<keyword id="KW-0808">Transferase</keyword>
<feature type="chain" id="PRO_0000314733" description="AMP phosphorylase">
    <location>
        <begin position="1"/>
        <end position="503"/>
    </location>
</feature>
<feature type="active site" description="Proton donor" evidence="1">
    <location>
        <position position="256"/>
    </location>
</feature>
<feature type="binding site" evidence="1">
    <location>
        <position position="168"/>
    </location>
    <ligand>
        <name>AMP</name>
        <dbReference type="ChEBI" id="CHEBI:456215"/>
    </ligand>
</feature>
<feature type="binding site" evidence="1">
    <location>
        <begin position="194"/>
        <end position="199"/>
    </location>
    <ligand>
        <name>AMP</name>
        <dbReference type="ChEBI" id="CHEBI:456215"/>
    </ligand>
</feature>
<feature type="binding site" evidence="1">
    <location>
        <position position="203"/>
    </location>
    <ligand>
        <name>AMP</name>
        <dbReference type="ChEBI" id="CHEBI:456215"/>
    </ligand>
</feature>
<feature type="binding site" evidence="1">
    <location>
        <position position="264"/>
    </location>
    <ligand>
        <name>AMP</name>
        <dbReference type="ChEBI" id="CHEBI:456215"/>
    </ligand>
</feature>
<feature type="binding site" evidence="1">
    <location>
        <position position="288"/>
    </location>
    <ligand>
        <name>AMP</name>
        <dbReference type="ChEBI" id="CHEBI:456215"/>
    </ligand>
</feature>
<protein>
    <recommendedName>
        <fullName evidence="1">AMP phosphorylase</fullName>
        <shortName evidence="1">AMPpase</shortName>
        <ecNumber evidence="1">2.4.2.57</ecNumber>
    </recommendedName>
    <alternativeName>
        <fullName evidence="1">Nucleoside monophosphate phosphorylase</fullName>
        <shortName evidence="1">NMP phosphorylase</shortName>
    </alternativeName>
</protein>
<gene>
    <name type="ordered locus">UNCMA_17660</name>
    <name type="ORF">RCIX1126</name>
</gene>
<proteinExistence type="inferred from homology"/>
<accession>Q0W5A8</accession>
<evidence type="ECO:0000255" key="1">
    <source>
        <dbReference type="HAMAP-Rule" id="MF_02132"/>
    </source>
</evidence>
<sequence length="503" mass="54495">MKLRAQPYDIEVGRYEVIINSADAEELGVLAGDRVQVKDKDTITAVVETTDAIVSPGKIGIYREAWESIKVVPDEVVEVLPAAKPKSVSFIRKKMDKQKLTSEEMHAIIEDIVDGNLTEVELTAFVTASYIYTMDSDEIEWMTRAMVKTGDQISFDVHPVMDHHSIGGVPGNKISLCIVPIIAAAGLLIPKTSSRAITGAGGSADLMEILCPVSFRADEIKKMTTKVGGCLVWGGATNIAPADDKIINVEYPLSIDPKSQLLASVMAKKFAVGADTMVLDIPCGNETKIPTVQEGRKLARDFMELGDRLGMKIECALTYGGTPLGRAIGGGVEVREAMVMLEKFEGPRSLLEKTIAISGMMLEMGGVAPKNEGAKMAVELVKSGKALQKFKEIIEVQGGDPKVTSDMVPIGDKVATVLSPQDGYVLEISNKRLVYMCRLAGAPHDKGVGVILHKKKGEYVKKGDGLFTLYADKEWKLDAAIKESLRNPIMMVEGMILEKIEVV</sequence>
<comment type="function">
    <text evidence="1">Catalyzes the conversion of AMP and phosphate to adenine and ribose 1,5-bisphosphate (R15P). Exhibits phosphorylase activity toward CMP and UMP in addition to AMP. Functions in an archaeal AMP degradation pathway, together with R15P isomerase and RubisCO.</text>
</comment>
<comment type="catalytic activity">
    <reaction evidence="1">
        <text>AMP + phosphate = alpha-D-ribose 1,5-bisphosphate + adenine</text>
        <dbReference type="Rhea" id="RHEA:36975"/>
        <dbReference type="ChEBI" id="CHEBI:16708"/>
        <dbReference type="ChEBI" id="CHEBI:43474"/>
        <dbReference type="ChEBI" id="CHEBI:68688"/>
        <dbReference type="ChEBI" id="CHEBI:456215"/>
        <dbReference type="EC" id="2.4.2.57"/>
    </reaction>
</comment>
<comment type="catalytic activity">
    <reaction evidence="1">
        <text>CMP + phosphate = cytosine + alpha-D-ribose 1,5-bisphosphate</text>
        <dbReference type="Rhea" id="RHEA:36987"/>
        <dbReference type="ChEBI" id="CHEBI:16040"/>
        <dbReference type="ChEBI" id="CHEBI:43474"/>
        <dbReference type="ChEBI" id="CHEBI:60377"/>
        <dbReference type="ChEBI" id="CHEBI:68688"/>
        <dbReference type="EC" id="2.4.2.57"/>
    </reaction>
</comment>
<comment type="catalytic activity">
    <reaction evidence="1">
        <text>UMP + phosphate = alpha-D-ribose 1,5-bisphosphate + uracil</text>
        <dbReference type="Rhea" id="RHEA:36991"/>
        <dbReference type="ChEBI" id="CHEBI:17568"/>
        <dbReference type="ChEBI" id="CHEBI:43474"/>
        <dbReference type="ChEBI" id="CHEBI:57865"/>
        <dbReference type="ChEBI" id="CHEBI:68688"/>
        <dbReference type="EC" id="2.4.2.57"/>
    </reaction>
</comment>
<comment type="similarity">
    <text evidence="1">Belongs to the thymidine/pyrimidine-nucleoside phosphorylase family. Type 2 subfamily.</text>
</comment>
<reference key="1">
    <citation type="journal article" date="2006" name="Science">
        <title>Genome of rice cluster I archaea -- the key methane producers in the rice rhizosphere.</title>
        <authorList>
            <person name="Erkel C."/>
            <person name="Kube M."/>
            <person name="Reinhardt R."/>
            <person name="Liesack W."/>
        </authorList>
    </citation>
    <scope>NUCLEOTIDE SEQUENCE [LARGE SCALE GENOMIC DNA]</scope>
    <source>
        <strain>DSM 22066 / NBRC 105507 / MRE50</strain>
    </source>
</reference>
<organism>
    <name type="scientific">Methanocella arvoryzae (strain DSM 22066 / NBRC 105507 / MRE50)</name>
    <dbReference type="NCBI Taxonomy" id="351160"/>
    <lineage>
        <taxon>Archaea</taxon>
        <taxon>Methanobacteriati</taxon>
        <taxon>Methanobacteriota</taxon>
        <taxon>Stenosarchaea group</taxon>
        <taxon>Methanomicrobia</taxon>
        <taxon>Methanocellales</taxon>
        <taxon>Methanocellaceae</taxon>
        <taxon>Methanocella</taxon>
    </lineage>
</organism>